<accession>O32757</accession>
<comment type="function">
    <text evidence="1">Involved in the gluconeogenesis. Catalyzes stereospecifically the conversion of dihydroxyacetone phosphate (DHAP) to D-glyceraldehyde-3-phosphate (G3P).</text>
</comment>
<comment type="catalytic activity">
    <reaction evidence="1">
        <text>D-glyceraldehyde 3-phosphate = dihydroxyacetone phosphate</text>
        <dbReference type="Rhea" id="RHEA:18585"/>
        <dbReference type="ChEBI" id="CHEBI:57642"/>
        <dbReference type="ChEBI" id="CHEBI:59776"/>
        <dbReference type="EC" id="5.3.1.1"/>
    </reaction>
</comment>
<comment type="pathway">
    <text evidence="1">Carbohydrate biosynthesis; gluconeogenesis.</text>
</comment>
<comment type="pathway">
    <text evidence="1">Carbohydrate degradation; glycolysis; D-glyceraldehyde 3-phosphate from glycerone phosphate: step 1/1.</text>
</comment>
<comment type="subunit">
    <text evidence="1">Homodimer.</text>
</comment>
<comment type="subcellular location">
    <subcellularLocation>
        <location evidence="1">Cytoplasm</location>
    </subcellularLocation>
</comment>
<comment type="similarity">
    <text evidence="1">Belongs to the triosephosphate isomerase family.</text>
</comment>
<name>TPIS_LACDE</name>
<proteinExistence type="inferred from homology"/>
<keyword id="KW-0963">Cytoplasm</keyword>
<keyword id="KW-0312">Gluconeogenesis</keyword>
<keyword id="KW-0324">Glycolysis</keyword>
<keyword id="KW-0413">Isomerase</keyword>
<gene>
    <name evidence="1" type="primary">tpiA</name>
    <name type="synonym">tpi</name>
</gene>
<feature type="chain" id="PRO_0000090231" description="Triosephosphate isomerase">
    <location>
        <begin position="1"/>
        <end position="252"/>
    </location>
</feature>
<feature type="active site" description="Electrophile" evidence="1">
    <location>
        <position position="96"/>
    </location>
</feature>
<feature type="active site" description="Proton acceptor" evidence="1">
    <location>
        <position position="168"/>
    </location>
</feature>
<feature type="binding site" evidence="1">
    <location>
        <begin position="10"/>
        <end position="12"/>
    </location>
    <ligand>
        <name>substrate</name>
    </ligand>
</feature>
<feature type="binding site" evidence="1">
    <location>
        <position position="174"/>
    </location>
    <ligand>
        <name>substrate</name>
    </ligand>
</feature>
<feature type="binding site" evidence="1">
    <location>
        <position position="214"/>
    </location>
    <ligand>
        <name>substrate</name>
    </ligand>
</feature>
<feature type="binding site" evidence="1">
    <location>
        <begin position="235"/>
        <end position="236"/>
    </location>
    <ligand>
        <name>substrate</name>
    </ligand>
</feature>
<reference key="1">
    <citation type="journal article" date="1998" name="Microbiology">
        <title>An operon encoding three glycolytic enzymes in Lactobacillus delbrueckii subsp. bulgaricus: glyceraldehyde-3-phosphate dehydrogenase, phosphoglycerate kinase and triosephosphate isomerase.</title>
        <authorList>
            <person name="Branny P."/>
            <person name="Delatorre F."/>
            <person name="Garel J.R."/>
        </authorList>
    </citation>
    <scope>NUCLEOTIDE SEQUENCE [GENOMIC DNA]</scope>
    <source>
        <strain>B107</strain>
    </source>
</reference>
<organism>
    <name type="scientific">Lactobacillus delbrueckii subsp. bulgaricus</name>
    <dbReference type="NCBI Taxonomy" id="1585"/>
    <lineage>
        <taxon>Bacteria</taxon>
        <taxon>Bacillati</taxon>
        <taxon>Bacillota</taxon>
        <taxon>Bacilli</taxon>
        <taxon>Lactobacillales</taxon>
        <taxon>Lactobacillaceae</taxon>
        <taxon>Lactobacillus</taxon>
    </lineage>
</organism>
<evidence type="ECO:0000255" key="1">
    <source>
        <dbReference type="HAMAP-Rule" id="MF_00147"/>
    </source>
</evidence>
<protein>
    <recommendedName>
        <fullName evidence="1">Triosephosphate isomerase</fullName>
        <shortName evidence="1">TIM</shortName>
        <shortName evidence="1">TPI</shortName>
        <ecNumber evidence="1">5.3.1.1</ecNumber>
    </recommendedName>
    <alternativeName>
        <fullName evidence="1">Triose-phosphate isomerase</fullName>
    </alternativeName>
</protein>
<dbReference type="EC" id="5.3.1.1" evidence="1"/>
<dbReference type="EMBL" id="AJ000339">
    <property type="protein sequence ID" value="CAA04016.1"/>
    <property type="molecule type" value="Genomic_DNA"/>
</dbReference>
<dbReference type="PIR" id="T09635">
    <property type="entry name" value="T09635"/>
</dbReference>
<dbReference type="RefSeq" id="WP_003618963.1">
    <property type="nucleotide sequence ID" value="NZ_RISR01000003.1"/>
</dbReference>
<dbReference type="SMR" id="O32757"/>
<dbReference type="OMA" id="NWKMHMT"/>
<dbReference type="BioCyc" id="MetaCyc:MONOMER-13051"/>
<dbReference type="UniPathway" id="UPA00109">
    <property type="reaction ID" value="UER00189"/>
</dbReference>
<dbReference type="UniPathway" id="UPA00138"/>
<dbReference type="GO" id="GO:0005829">
    <property type="term" value="C:cytosol"/>
    <property type="evidence" value="ECO:0007669"/>
    <property type="project" value="TreeGrafter"/>
</dbReference>
<dbReference type="GO" id="GO:0004807">
    <property type="term" value="F:triose-phosphate isomerase activity"/>
    <property type="evidence" value="ECO:0007669"/>
    <property type="project" value="UniProtKB-UniRule"/>
</dbReference>
<dbReference type="GO" id="GO:0006094">
    <property type="term" value="P:gluconeogenesis"/>
    <property type="evidence" value="ECO:0007669"/>
    <property type="project" value="UniProtKB-UniRule"/>
</dbReference>
<dbReference type="GO" id="GO:0046166">
    <property type="term" value="P:glyceraldehyde-3-phosphate biosynthetic process"/>
    <property type="evidence" value="ECO:0007669"/>
    <property type="project" value="TreeGrafter"/>
</dbReference>
<dbReference type="GO" id="GO:0019563">
    <property type="term" value="P:glycerol catabolic process"/>
    <property type="evidence" value="ECO:0007669"/>
    <property type="project" value="TreeGrafter"/>
</dbReference>
<dbReference type="GO" id="GO:0006096">
    <property type="term" value="P:glycolytic process"/>
    <property type="evidence" value="ECO:0007669"/>
    <property type="project" value="UniProtKB-UniRule"/>
</dbReference>
<dbReference type="CDD" id="cd00311">
    <property type="entry name" value="TIM"/>
    <property type="match status" value="1"/>
</dbReference>
<dbReference type="FunFam" id="3.20.20.70:FF:000016">
    <property type="entry name" value="Triosephosphate isomerase"/>
    <property type="match status" value="1"/>
</dbReference>
<dbReference type="Gene3D" id="3.20.20.70">
    <property type="entry name" value="Aldolase class I"/>
    <property type="match status" value="1"/>
</dbReference>
<dbReference type="HAMAP" id="MF_00147_B">
    <property type="entry name" value="TIM_B"/>
    <property type="match status" value="1"/>
</dbReference>
<dbReference type="InterPro" id="IPR013785">
    <property type="entry name" value="Aldolase_TIM"/>
</dbReference>
<dbReference type="InterPro" id="IPR035990">
    <property type="entry name" value="TIM_sf"/>
</dbReference>
<dbReference type="InterPro" id="IPR022896">
    <property type="entry name" value="TrioseP_Isoase_bac/euk"/>
</dbReference>
<dbReference type="InterPro" id="IPR000652">
    <property type="entry name" value="Triosephosphate_isomerase"/>
</dbReference>
<dbReference type="InterPro" id="IPR020861">
    <property type="entry name" value="Triosephosphate_isomerase_AS"/>
</dbReference>
<dbReference type="NCBIfam" id="TIGR00419">
    <property type="entry name" value="tim"/>
    <property type="match status" value="1"/>
</dbReference>
<dbReference type="PANTHER" id="PTHR21139">
    <property type="entry name" value="TRIOSEPHOSPHATE ISOMERASE"/>
    <property type="match status" value="1"/>
</dbReference>
<dbReference type="PANTHER" id="PTHR21139:SF42">
    <property type="entry name" value="TRIOSEPHOSPHATE ISOMERASE"/>
    <property type="match status" value="1"/>
</dbReference>
<dbReference type="Pfam" id="PF00121">
    <property type="entry name" value="TIM"/>
    <property type="match status" value="1"/>
</dbReference>
<dbReference type="SUPFAM" id="SSF51351">
    <property type="entry name" value="Triosephosphate isomerase (TIM)"/>
    <property type="match status" value="1"/>
</dbReference>
<dbReference type="PROSITE" id="PS00171">
    <property type="entry name" value="TIM_1"/>
    <property type="match status" value="1"/>
</dbReference>
<dbReference type="PROSITE" id="PS51440">
    <property type="entry name" value="TIM_2"/>
    <property type="match status" value="1"/>
</dbReference>
<sequence length="252" mass="27383">MSRTPIIAGNWKLNMNPKETVEFVNAVKDQLPDPSKVESVICAPAVDLDALLKAAEGSNLHVGAENCYWENSGAFTGETSPAVLKEMGVQYVIIGHSERRDYFHETDEDINKKAKAIFANGLTPILCCGESLETREAGKENEWVVSQIKAGLEGLTSEQVSKLVIAYEPIWAIGTGKTASSDQAEEMCKTIRETVKDLYNEETAENVRIQYGGSVKPANVKELMAKPNIDGGLVGGASLVPDSYLALVNYQD</sequence>